<comment type="function">
    <text evidence="1">Cell wall formation. Adds enolpyruvyl to UDP-N-acetylglucosamine.</text>
</comment>
<comment type="catalytic activity">
    <reaction evidence="1">
        <text>phosphoenolpyruvate + UDP-N-acetyl-alpha-D-glucosamine = UDP-N-acetyl-3-O-(1-carboxyvinyl)-alpha-D-glucosamine + phosphate</text>
        <dbReference type="Rhea" id="RHEA:18681"/>
        <dbReference type="ChEBI" id="CHEBI:43474"/>
        <dbReference type="ChEBI" id="CHEBI:57705"/>
        <dbReference type="ChEBI" id="CHEBI:58702"/>
        <dbReference type="ChEBI" id="CHEBI:68483"/>
        <dbReference type="EC" id="2.5.1.7"/>
    </reaction>
</comment>
<comment type="pathway">
    <text evidence="1">Cell wall biogenesis; peptidoglycan biosynthesis.</text>
</comment>
<comment type="subcellular location">
    <subcellularLocation>
        <location evidence="1">Cytoplasm</location>
    </subcellularLocation>
</comment>
<comment type="similarity">
    <text evidence="1">Belongs to the EPSP synthase family. MurA subfamily.</text>
</comment>
<sequence length="419" mass="45075">MAQEVIKIRGGRTLNGEVNISGAKNSAVAIIPATLLAQGHVKLEGLPQISDVKTLVSLLEDLNIKASLNGTELEVDTTEIQNAALPNNKVESLRASYYMMGAMLGRFKKCVIGLPGGCPLGPRPIDQHIKGFKALGAEIDESSTTSMKIEAKELKGAHIFLDMVSVGATINIMLAAVYATGQTVIENAAKEPEVVDVANFLTSMGANIKGAGTSTIKINGVKELHGSEYQVIPDRIEAGTYMCIAAACGENVILNNIVPKHVETLTAKFSELGVNVDVRDERIRINNNAPYQFVDIKTLVYPGFATDLQQPITPLLFMANGPSFVTDTIYPERFKHVEELKRMGANIEVDEGTATIKPSTLHGAEVYASDLRAGACLIIAGLIAEGVTTIYNVKHIYRGYTDIVEHLKALGADIWTETV</sequence>
<feature type="chain" id="PRO_0000231265" description="UDP-N-acetylglucosamine 1-carboxyvinyltransferase 2">
    <location>
        <begin position="1"/>
        <end position="419"/>
    </location>
</feature>
<feature type="active site" description="Proton donor" evidence="1">
    <location>
        <position position="118"/>
    </location>
</feature>
<feature type="binding site" evidence="1">
    <location>
        <begin position="24"/>
        <end position="25"/>
    </location>
    <ligand>
        <name>phosphoenolpyruvate</name>
        <dbReference type="ChEBI" id="CHEBI:58702"/>
    </ligand>
</feature>
<feature type="binding site" evidence="1">
    <location>
        <position position="94"/>
    </location>
    <ligand>
        <name>UDP-N-acetyl-alpha-D-glucosamine</name>
        <dbReference type="ChEBI" id="CHEBI:57705"/>
    </ligand>
</feature>
<feature type="binding site" evidence="1">
    <location>
        <begin position="123"/>
        <end position="127"/>
    </location>
    <ligand>
        <name>UDP-N-acetyl-alpha-D-glucosamine</name>
        <dbReference type="ChEBI" id="CHEBI:57705"/>
    </ligand>
</feature>
<feature type="binding site" evidence="1">
    <location>
        <position position="307"/>
    </location>
    <ligand>
        <name>UDP-N-acetyl-alpha-D-glucosamine</name>
        <dbReference type="ChEBI" id="CHEBI:57705"/>
    </ligand>
</feature>
<feature type="binding site" evidence="1">
    <location>
        <position position="329"/>
    </location>
    <ligand>
        <name>UDP-N-acetyl-alpha-D-glucosamine</name>
        <dbReference type="ChEBI" id="CHEBI:57705"/>
    </ligand>
</feature>
<feature type="modified residue" description="2-(S-cysteinyl)pyruvic acid O-phosphothioketal" evidence="1">
    <location>
        <position position="118"/>
    </location>
</feature>
<name>MURA2_STAAB</name>
<gene>
    <name evidence="1" type="primary">murA2</name>
    <name type="ordered locus">SAB2008c</name>
</gene>
<proteinExistence type="inferred from homology"/>
<organism>
    <name type="scientific">Staphylococcus aureus (strain bovine RF122 / ET3-1)</name>
    <dbReference type="NCBI Taxonomy" id="273036"/>
    <lineage>
        <taxon>Bacteria</taxon>
        <taxon>Bacillati</taxon>
        <taxon>Bacillota</taxon>
        <taxon>Bacilli</taxon>
        <taxon>Bacillales</taxon>
        <taxon>Staphylococcaceae</taxon>
        <taxon>Staphylococcus</taxon>
    </lineage>
</organism>
<evidence type="ECO:0000255" key="1">
    <source>
        <dbReference type="HAMAP-Rule" id="MF_00111"/>
    </source>
</evidence>
<protein>
    <recommendedName>
        <fullName evidence="1">UDP-N-acetylglucosamine 1-carboxyvinyltransferase 2</fullName>
        <ecNumber evidence="1">2.5.1.7</ecNumber>
    </recommendedName>
    <alternativeName>
        <fullName evidence="1">Enoylpyruvate transferase 2</fullName>
    </alternativeName>
    <alternativeName>
        <fullName evidence="1">UDP-N-acetylglucosamine enolpyruvyl transferase 2</fullName>
        <shortName evidence="1">EPT 2</shortName>
    </alternativeName>
</protein>
<reference key="1">
    <citation type="journal article" date="2007" name="PLoS ONE">
        <title>Molecular correlates of host specialization in Staphylococcus aureus.</title>
        <authorList>
            <person name="Herron-Olson L."/>
            <person name="Fitzgerald J.R."/>
            <person name="Musser J.M."/>
            <person name="Kapur V."/>
        </authorList>
    </citation>
    <scope>NUCLEOTIDE SEQUENCE [LARGE SCALE GENOMIC DNA]</scope>
    <source>
        <strain>bovine RF122 / ET3-1</strain>
    </source>
</reference>
<accession>Q2YUM9</accession>
<dbReference type="EC" id="2.5.1.7" evidence="1"/>
<dbReference type="EMBL" id="AJ938182">
    <property type="protein sequence ID" value="CAI81697.1"/>
    <property type="molecule type" value="Genomic_DNA"/>
</dbReference>
<dbReference type="RefSeq" id="WP_000046602.1">
    <property type="nucleotide sequence ID" value="NC_007622.1"/>
</dbReference>
<dbReference type="SMR" id="Q2YUM9"/>
<dbReference type="KEGG" id="sab:SAB2008c"/>
<dbReference type="HOGENOM" id="CLU_027387_0_0_9"/>
<dbReference type="UniPathway" id="UPA00219"/>
<dbReference type="GO" id="GO:0005737">
    <property type="term" value="C:cytoplasm"/>
    <property type="evidence" value="ECO:0007669"/>
    <property type="project" value="UniProtKB-SubCell"/>
</dbReference>
<dbReference type="GO" id="GO:0008760">
    <property type="term" value="F:UDP-N-acetylglucosamine 1-carboxyvinyltransferase activity"/>
    <property type="evidence" value="ECO:0007669"/>
    <property type="project" value="UniProtKB-UniRule"/>
</dbReference>
<dbReference type="GO" id="GO:0051301">
    <property type="term" value="P:cell division"/>
    <property type="evidence" value="ECO:0007669"/>
    <property type="project" value="UniProtKB-KW"/>
</dbReference>
<dbReference type="GO" id="GO:0071555">
    <property type="term" value="P:cell wall organization"/>
    <property type="evidence" value="ECO:0007669"/>
    <property type="project" value="UniProtKB-KW"/>
</dbReference>
<dbReference type="GO" id="GO:0009252">
    <property type="term" value="P:peptidoglycan biosynthetic process"/>
    <property type="evidence" value="ECO:0007669"/>
    <property type="project" value="UniProtKB-UniRule"/>
</dbReference>
<dbReference type="GO" id="GO:0008360">
    <property type="term" value="P:regulation of cell shape"/>
    <property type="evidence" value="ECO:0007669"/>
    <property type="project" value="UniProtKB-KW"/>
</dbReference>
<dbReference type="GO" id="GO:0019277">
    <property type="term" value="P:UDP-N-acetylgalactosamine biosynthetic process"/>
    <property type="evidence" value="ECO:0007669"/>
    <property type="project" value="InterPro"/>
</dbReference>
<dbReference type="CDD" id="cd01555">
    <property type="entry name" value="UdpNAET"/>
    <property type="match status" value="1"/>
</dbReference>
<dbReference type="FunFam" id="3.65.10.10:FF:000001">
    <property type="entry name" value="UDP-N-acetylglucosamine 1-carboxyvinyltransferase"/>
    <property type="match status" value="1"/>
</dbReference>
<dbReference type="Gene3D" id="3.65.10.10">
    <property type="entry name" value="Enolpyruvate transferase domain"/>
    <property type="match status" value="2"/>
</dbReference>
<dbReference type="HAMAP" id="MF_00111">
    <property type="entry name" value="MurA"/>
    <property type="match status" value="1"/>
</dbReference>
<dbReference type="InterPro" id="IPR001986">
    <property type="entry name" value="Enolpyruvate_Tfrase_dom"/>
</dbReference>
<dbReference type="InterPro" id="IPR036968">
    <property type="entry name" value="Enolpyruvate_Tfrase_sf"/>
</dbReference>
<dbReference type="InterPro" id="IPR050068">
    <property type="entry name" value="MurA_subfamily"/>
</dbReference>
<dbReference type="InterPro" id="IPR013792">
    <property type="entry name" value="RNA3'P_cycl/enolpyr_Trfase_a/b"/>
</dbReference>
<dbReference type="InterPro" id="IPR005750">
    <property type="entry name" value="UDP_GlcNAc_COvinyl_MurA"/>
</dbReference>
<dbReference type="NCBIfam" id="TIGR01072">
    <property type="entry name" value="murA"/>
    <property type="match status" value="1"/>
</dbReference>
<dbReference type="NCBIfam" id="NF006873">
    <property type="entry name" value="PRK09369.1"/>
    <property type="match status" value="1"/>
</dbReference>
<dbReference type="NCBIfam" id="NF009470">
    <property type="entry name" value="PRK12830.1"/>
    <property type="match status" value="1"/>
</dbReference>
<dbReference type="PANTHER" id="PTHR43783">
    <property type="entry name" value="UDP-N-ACETYLGLUCOSAMINE 1-CARBOXYVINYLTRANSFERASE"/>
    <property type="match status" value="1"/>
</dbReference>
<dbReference type="PANTHER" id="PTHR43783:SF2">
    <property type="entry name" value="UDP-N-ACETYLGLUCOSAMINE 1-CARBOXYVINYLTRANSFERASE 2"/>
    <property type="match status" value="1"/>
</dbReference>
<dbReference type="Pfam" id="PF00275">
    <property type="entry name" value="EPSP_synthase"/>
    <property type="match status" value="1"/>
</dbReference>
<dbReference type="SUPFAM" id="SSF55205">
    <property type="entry name" value="EPT/RTPC-like"/>
    <property type="match status" value="1"/>
</dbReference>
<keyword id="KW-0131">Cell cycle</keyword>
<keyword id="KW-0132">Cell division</keyword>
<keyword id="KW-0133">Cell shape</keyword>
<keyword id="KW-0961">Cell wall biogenesis/degradation</keyword>
<keyword id="KW-0963">Cytoplasm</keyword>
<keyword id="KW-0573">Peptidoglycan synthesis</keyword>
<keyword id="KW-0670">Pyruvate</keyword>
<keyword id="KW-0808">Transferase</keyword>